<evidence type="ECO:0000255" key="1">
    <source>
        <dbReference type="HAMAP-Rule" id="MF_01014"/>
    </source>
</evidence>
<keyword id="KW-0028">Amino-acid biosynthesis</keyword>
<keyword id="KW-0963">Cytoplasm</keyword>
<keyword id="KW-0368">Histidine biosynthesis</keyword>
<keyword id="KW-0413">Isomerase</keyword>
<reference key="1">
    <citation type="submission" date="2007-11" db="EMBL/GenBank/DDBJ databases">
        <title>The genome sequence of the hyperthermophilic bacterium Thermotoga neapolitana.</title>
        <authorList>
            <person name="Lim S.K."/>
            <person name="Kim J.S."/>
            <person name="Cha S.H."/>
            <person name="Park B.C."/>
            <person name="Lee D.S."/>
            <person name="Tae H.S."/>
            <person name="Kim S.-J."/>
            <person name="Kim J.J."/>
            <person name="Park K.J."/>
            <person name="Lee S.Y."/>
        </authorList>
    </citation>
    <scope>NUCLEOTIDE SEQUENCE [LARGE SCALE GENOMIC DNA]</scope>
    <source>
        <strain>ATCC 49049 / DSM 4359 / NBRC 107923 / NS-E</strain>
    </source>
</reference>
<name>HIS4_THENN</name>
<accession>B9K9S2</accession>
<gene>
    <name evidence="1" type="primary">hisA</name>
    <name type="ordered locus">CTN_1529</name>
</gene>
<comment type="catalytic activity">
    <reaction evidence="1">
        <text>1-(5-phospho-beta-D-ribosyl)-5-[(5-phospho-beta-D-ribosylamino)methylideneamino]imidazole-4-carboxamide = 5-[(5-phospho-1-deoxy-D-ribulos-1-ylimino)methylamino]-1-(5-phospho-beta-D-ribosyl)imidazole-4-carboxamide</text>
        <dbReference type="Rhea" id="RHEA:15469"/>
        <dbReference type="ChEBI" id="CHEBI:58435"/>
        <dbReference type="ChEBI" id="CHEBI:58525"/>
        <dbReference type="EC" id="5.3.1.16"/>
    </reaction>
</comment>
<comment type="pathway">
    <text evidence="1">Amino-acid biosynthesis; L-histidine biosynthesis; L-histidine from 5-phospho-alpha-D-ribose 1-diphosphate: step 4/9.</text>
</comment>
<comment type="subcellular location">
    <subcellularLocation>
        <location evidence="1">Cytoplasm</location>
    </subcellularLocation>
</comment>
<comment type="similarity">
    <text evidence="1">Belongs to the HisA/HisF family.</text>
</comment>
<dbReference type="EC" id="5.3.1.16" evidence="1"/>
<dbReference type="EMBL" id="CP000916">
    <property type="protein sequence ID" value="ACM23705.1"/>
    <property type="molecule type" value="Genomic_DNA"/>
</dbReference>
<dbReference type="RefSeq" id="WP_015919994.1">
    <property type="nucleotide sequence ID" value="NC_011978.1"/>
</dbReference>
<dbReference type="SMR" id="B9K9S2"/>
<dbReference type="STRING" id="309803.CTN_1529"/>
<dbReference type="KEGG" id="tna:CTN_1529"/>
<dbReference type="eggNOG" id="COG0106">
    <property type="taxonomic scope" value="Bacteria"/>
</dbReference>
<dbReference type="HOGENOM" id="CLU_048577_1_1_0"/>
<dbReference type="UniPathway" id="UPA00031">
    <property type="reaction ID" value="UER00009"/>
</dbReference>
<dbReference type="Proteomes" id="UP000000445">
    <property type="component" value="Chromosome"/>
</dbReference>
<dbReference type="GO" id="GO:0005737">
    <property type="term" value="C:cytoplasm"/>
    <property type="evidence" value="ECO:0007669"/>
    <property type="project" value="UniProtKB-SubCell"/>
</dbReference>
<dbReference type="GO" id="GO:0003949">
    <property type="term" value="F:1-(5-phosphoribosyl)-5-[(5-phosphoribosylamino)methylideneamino]imidazole-4-carboxamide isomerase activity"/>
    <property type="evidence" value="ECO:0007669"/>
    <property type="project" value="UniProtKB-UniRule"/>
</dbReference>
<dbReference type="GO" id="GO:0000105">
    <property type="term" value="P:L-histidine biosynthetic process"/>
    <property type="evidence" value="ECO:0007669"/>
    <property type="project" value="UniProtKB-UniRule"/>
</dbReference>
<dbReference type="GO" id="GO:0000162">
    <property type="term" value="P:L-tryptophan biosynthetic process"/>
    <property type="evidence" value="ECO:0007669"/>
    <property type="project" value="TreeGrafter"/>
</dbReference>
<dbReference type="CDD" id="cd04732">
    <property type="entry name" value="HisA"/>
    <property type="match status" value="1"/>
</dbReference>
<dbReference type="Gene3D" id="3.20.20.70">
    <property type="entry name" value="Aldolase class I"/>
    <property type="match status" value="1"/>
</dbReference>
<dbReference type="HAMAP" id="MF_01014">
    <property type="entry name" value="HisA"/>
    <property type="match status" value="1"/>
</dbReference>
<dbReference type="InterPro" id="IPR013785">
    <property type="entry name" value="Aldolase_TIM"/>
</dbReference>
<dbReference type="InterPro" id="IPR006062">
    <property type="entry name" value="His_biosynth"/>
</dbReference>
<dbReference type="InterPro" id="IPR044524">
    <property type="entry name" value="Isoase_HisA-like"/>
</dbReference>
<dbReference type="InterPro" id="IPR023016">
    <property type="entry name" value="Isoase_HisA-like_bact"/>
</dbReference>
<dbReference type="InterPro" id="IPR011060">
    <property type="entry name" value="RibuloseP-bd_barrel"/>
</dbReference>
<dbReference type="NCBIfam" id="NF010712">
    <property type="entry name" value="PRK14114.1"/>
    <property type="match status" value="1"/>
</dbReference>
<dbReference type="PANTHER" id="PTHR43090">
    <property type="entry name" value="1-(5-PHOSPHORIBOSYL)-5-[(5-PHOSPHORIBOSYLAMINO)METHYLIDENEAMINO] IMIDAZOLE-4-CARBOXAMIDE ISOMERASE"/>
    <property type="match status" value="1"/>
</dbReference>
<dbReference type="PANTHER" id="PTHR43090:SF2">
    <property type="entry name" value="1-(5-PHOSPHORIBOSYL)-5-[(5-PHOSPHORIBOSYLAMINO)METHYLIDENEAMINO] IMIDAZOLE-4-CARBOXAMIDE ISOMERASE"/>
    <property type="match status" value="1"/>
</dbReference>
<dbReference type="Pfam" id="PF00977">
    <property type="entry name" value="His_biosynth"/>
    <property type="match status" value="1"/>
</dbReference>
<dbReference type="SUPFAM" id="SSF51366">
    <property type="entry name" value="Ribulose-phoshate binding barrel"/>
    <property type="match status" value="1"/>
</dbReference>
<proteinExistence type="inferred from homology"/>
<feature type="chain" id="PRO_1000148989" description="1-(5-phosphoribosyl)-5-[(5-phosphoribosylamino)methylideneamino] imidazole-4-carboxamide isomerase">
    <location>
        <begin position="1"/>
        <end position="248"/>
    </location>
</feature>
<feature type="active site" description="Proton acceptor" evidence="1">
    <location>
        <position position="8"/>
    </location>
</feature>
<feature type="active site" description="Proton donor" evidence="1">
    <location>
        <position position="127"/>
    </location>
</feature>
<organism>
    <name type="scientific">Thermotoga neapolitana (strain ATCC 49049 / DSM 4359 / NBRC 107923 / NS-E)</name>
    <dbReference type="NCBI Taxonomy" id="309803"/>
    <lineage>
        <taxon>Bacteria</taxon>
        <taxon>Thermotogati</taxon>
        <taxon>Thermotogota</taxon>
        <taxon>Thermotogae</taxon>
        <taxon>Thermotogales</taxon>
        <taxon>Thermotogaceae</taxon>
        <taxon>Thermotoga</taxon>
    </lineage>
</organism>
<sequence>MLVIPAIDLYRKKVVRMVKGKKENTIFYEKDPIELVEKLVEEGFSLIHVVDLSRAIEESDENLPVLEKLSSYADHIQIGGGIRILEYAKKLLGMGFRRQIVSSKVLEDPSFLKKLKEIGVNPVFSLDTREGKVAFKGWLDEKDIDPVFLVNRLKEFGLEEIVHTEIEKDGTLKEHDFSLTERIALETGVKVIAAGGISSERSLEEALEVHRRTNGLLKGVIVGRAFLEGTLTVEVMKRYACQENNSVS</sequence>
<protein>
    <recommendedName>
        <fullName evidence="1">1-(5-phosphoribosyl)-5-[(5-phosphoribosylamino)methylideneamino] imidazole-4-carboxamide isomerase</fullName>
        <ecNumber evidence="1">5.3.1.16</ecNumber>
    </recommendedName>
    <alternativeName>
        <fullName evidence="1">Phosphoribosylformimino-5-aminoimidazole carboxamide ribotide isomerase</fullName>
    </alternativeName>
</protein>